<proteinExistence type="evidence at protein level"/>
<protein>
    <recommendedName>
        <fullName>Probable bifunctional transcriptional activator/DNA repair enzyme AlkA</fullName>
    </recommendedName>
    <alternativeName>
        <fullName>Regulatory protein AlkA</fullName>
    </alternativeName>
    <domain>
        <recommendedName>
            <fullName>Methylphosphotriester-DNA--protein-cysteine S-methyltransferase</fullName>
            <ecNumber>2.1.1.n11</ecNumber>
        </recommendedName>
        <alternativeName>
            <fullName>Methylphosphotriester-DNA methyltransferase</fullName>
        </alternativeName>
    </domain>
    <domain>
        <recommendedName>
            <fullName>DNA-3-methyladenine glycosylase</fullName>
            <ecNumber>3.2.2.21</ecNumber>
        </recommendedName>
        <alternativeName>
            <fullName>DNA-3-methyladenine glycosidase</fullName>
        </alternativeName>
    </domain>
</protein>
<accession>P9WJW3</accession>
<accession>L0T913</accession>
<accession>Q10630</accession>
<organism>
    <name type="scientific">Mycobacterium tuberculosis (strain ATCC 25618 / H37Rv)</name>
    <dbReference type="NCBI Taxonomy" id="83332"/>
    <lineage>
        <taxon>Bacteria</taxon>
        <taxon>Bacillati</taxon>
        <taxon>Actinomycetota</taxon>
        <taxon>Actinomycetes</taxon>
        <taxon>Mycobacteriales</taxon>
        <taxon>Mycobacteriaceae</taxon>
        <taxon>Mycobacterium</taxon>
        <taxon>Mycobacterium tuberculosis complex</taxon>
    </lineage>
</organism>
<dbReference type="EC" id="2.1.1.n11"/>
<dbReference type="EC" id="3.2.2.21"/>
<dbReference type="EMBL" id="U65786">
    <property type="protein sequence ID" value="AAB06751.1"/>
    <property type="molecule type" value="Genomic_DNA"/>
</dbReference>
<dbReference type="EMBL" id="AL123456">
    <property type="protein sequence ID" value="CCP44074.1"/>
    <property type="molecule type" value="Genomic_DNA"/>
</dbReference>
<dbReference type="PIR" id="A70769">
    <property type="entry name" value="A70769"/>
</dbReference>
<dbReference type="RefSeq" id="NP_215833.1">
    <property type="nucleotide sequence ID" value="NC_000962.3"/>
</dbReference>
<dbReference type="RefSeq" id="WP_003900313.1">
    <property type="nucleotide sequence ID" value="NZ_NVQJ01000059.1"/>
</dbReference>
<dbReference type="SMR" id="P9WJW3"/>
<dbReference type="STRING" id="83332.Rv1317c"/>
<dbReference type="PaxDb" id="83332-Rv1317c"/>
<dbReference type="DNASU" id="886916"/>
<dbReference type="GeneID" id="886916"/>
<dbReference type="KEGG" id="mtu:Rv1317c"/>
<dbReference type="KEGG" id="mtv:RVBD_1317c"/>
<dbReference type="TubercuList" id="Rv1317c"/>
<dbReference type="eggNOG" id="COG0122">
    <property type="taxonomic scope" value="Bacteria"/>
</dbReference>
<dbReference type="eggNOG" id="COG2169">
    <property type="taxonomic scope" value="Bacteria"/>
</dbReference>
<dbReference type="InParanoid" id="P9WJW3"/>
<dbReference type="OrthoDB" id="9811249at2"/>
<dbReference type="PhylomeDB" id="P9WJW3"/>
<dbReference type="Proteomes" id="UP000001584">
    <property type="component" value="Chromosome"/>
</dbReference>
<dbReference type="GO" id="GO:0005737">
    <property type="term" value="C:cytoplasm"/>
    <property type="evidence" value="ECO:0000318"/>
    <property type="project" value="GO_Central"/>
</dbReference>
<dbReference type="GO" id="GO:0009274">
    <property type="term" value="C:peptidoglycan-based cell wall"/>
    <property type="evidence" value="ECO:0007005"/>
    <property type="project" value="MTBBASE"/>
</dbReference>
<dbReference type="GO" id="GO:0005886">
    <property type="term" value="C:plasma membrane"/>
    <property type="evidence" value="ECO:0007005"/>
    <property type="project" value="MTBBASE"/>
</dbReference>
<dbReference type="GO" id="GO:0032993">
    <property type="term" value="C:protein-DNA complex"/>
    <property type="evidence" value="ECO:0000318"/>
    <property type="project" value="GO_Central"/>
</dbReference>
<dbReference type="GO" id="GO:0032131">
    <property type="term" value="F:alkylated DNA binding"/>
    <property type="evidence" value="ECO:0000318"/>
    <property type="project" value="GO_Central"/>
</dbReference>
<dbReference type="GO" id="GO:0008725">
    <property type="term" value="F:DNA-3-methyladenine glycosylase activity"/>
    <property type="evidence" value="ECO:0000318"/>
    <property type="project" value="GO_Central"/>
</dbReference>
<dbReference type="GO" id="GO:0043916">
    <property type="term" value="F:DNA-7-methylguanine glycosylase activity"/>
    <property type="evidence" value="ECO:0000318"/>
    <property type="project" value="GO_Central"/>
</dbReference>
<dbReference type="GO" id="GO:0003700">
    <property type="term" value="F:DNA-binding transcription factor activity"/>
    <property type="evidence" value="ECO:0007669"/>
    <property type="project" value="InterPro"/>
</dbReference>
<dbReference type="GO" id="GO:0008168">
    <property type="term" value="F:methyltransferase activity"/>
    <property type="evidence" value="ECO:0007669"/>
    <property type="project" value="UniProtKB-KW"/>
</dbReference>
<dbReference type="GO" id="GO:0043565">
    <property type="term" value="F:sequence-specific DNA binding"/>
    <property type="evidence" value="ECO:0007669"/>
    <property type="project" value="InterPro"/>
</dbReference>
<dbReference type="GO" id="GO:0008270">
    <property type="term" value="F:zinc ion binding"/>
    <property type="evidence" value="ECO:0007669"/>
    <property type="project" value="InterPro"/>
</dbReference>
<dbReference type="GO" id="GO:0006285">
    <property type="term" value="P:base-excision repair, AP site formation"/>
    <property type="evidence" value="ECO:0000318"/>
    <property type="project" value="GO_Central"/>
</dbReference>
<dbReference type="GO" id="GO:0006307">
    <property type="term" value="P:DNA alkylation repair"/>
    <property type="evidence" value="ECO:0000314"/>
    <property type="project" value="MTBBASE"/>
</dbReference>
<dbReference type="GO" id="GO:0032259">
    <property type="term" value="P:methylation"/>
    <property type="evidence" value="ECO:0007669"/>
    <property type="project" value="UniProtKB-KW"/>
</dbReference>
<dbReference type="GO" id="GO:0051409">
    <property type="term" value="P:response to nitrosative stress"/>
    <property type="evidence" value="ECO:0000314"/>
    <property type="project" value="MTBBASE"/>
</dbReference>
<dbReference type="CDD" id="cd00056">
    <property type="entry name" value="ENDO3c"/>
    <property type="match status" value="1"/>
</dbReference>
<dbReference type="FunFam" id="1.10.340.30:FF:000008">
    <property type="entry name" value="DNA-3-methyladenine glycosylase 2"/>
    <property type="match status" value="1"/>
</dbReference>
<dbReference type="FunFam" id="3.30.310.20:FF:000001">
    <property type="entry name" value="DNA-3-methyladenine glycosylase 2"/>
    <property type="match status" value="1"/>
</dbReference>
<dbReference type="FunFam" id="3.40.10.10:FF:000001">
    <property type="entry name" value="DNA-3-methyladenine glycosylase 2"/>
    <property type="match status" value="1"/>
</dbReference>
<dbReference type="Gene3D" id="3.40.10.10">
    <property type="entry name" value="DNA Methylphosphotriester Repair Domain"/>
    <property type="match status" value="1"/>
</dbReference>
<dbReference type="Gene3D" id="3.30.310.20">
    <property type="entry name" value="DNA-3-methyladenine glycosylase AlkA, N-terminal domain"/>
    <property type="match status" value="1"/>
</dbReference>
<dbReference type="Gene3D" id="1.10.1670.10">
    <property type="entry name" value="Helix-hairpin-Helix base-excision DNA repair enzymes (C-terminal)"/>
    <property type="match status" value="1"/>
</dbReference>
<dbReference type="Gene3D" id="1.10.10.60">
    <property type="entry name" value="Homeodomain-like"/>
    <property type="match status" value="1"/>
</dbReference>
<dbReference type="Gene3D" id="1.10.340.30">
    <property type="entry name" value="Hypothetical protein, domain 2"/>
    <property type="match status" value="1"/>
</dbReference>
<dbReference type="InterPro" id="IPR035451">
    <property type="entry name" value="Ada-like_dom_sf"/>
</dbReference>
<dbReference type="InterPro" id="IPR004026">
    <property type="entry name" value="Ada_DNA_repair_Zn-bd"/>
</dbReference>
<dbReference type="InterPro" id="IPR010316">
    <property type="entry name" value="AlkA_N"/>
</dbReference>
<dbReference type="InterPro" id="IPR037046">
    <property type="entry name" value="AlkA_N_sf"/>
</dbReference>
<dbReference type="InterPro" id="IPR051912">
    <property type="entry name" value="Alkylbase_DNA_Glycosylase/TA"/>
</dbReference>
<dbReference type="InterPro" id="IPR011257">
    <property type="entry name" value="DNA_glycosylase"/>
</dbReference>
<dbReference type="InterPro" id="IPR003265">
    <property type="entry name" value="HhH-GPD_domain"/>
</dbReference>
<dbReference type="InterPro" id="IPR023170">
    <property type="entry name" value="HhH_base_excis_C"/>
</dbReference>
<dbReference type="InterPro" id="IPR009057">
    <property type="entry name" value="Homeodomain-like_sf"/>
</dbReference>
<dbReference type="InterPro" id="IPR018060">
    <property type="entry name" value="HTH_AraC"/>
</dbReference>
<dbReference type="InterPro" id="IPR018062">
    <property type="entry name" value="HTH_AraC-typ_CS"/>
</dbReference>
<dbReference type="PANTHER" id="PTHR43003">
    <property type="entry name" value="DNA-3-METHYLADENINE GLYCOSYLASE"/>
    <property type="match status" value="1"/>
</dbReference>
<dbReference type="PANTHER" id="PTHR43003:SF13">
    <property type="entry name" value="DNA-3-METHYLADENINE GLYCOSYLASE 2"/>
    <property type="match status" value="1"/>
</dbReference>
<dbReference type="Pfam" id="PF02805">
    <property type="entry name" value="Ada_Zn_binding"/>
    <property type="match status" value="1"/>
</dbReference>
<dbReference type="Pfam" id="PF06029">
    <property type="entry name" value="AlkA_N"/>
    <property type="match status" value="1"/>
</dbReference>
<dbReference type="Pfam" id="PF00730">
    <property type="entry name" value="HhH-GPD"/>
    <property type="match status" value="1"/>
</dbReference>
<dbReference type="Pfam" id="PF12833">
    <property type="entry name" value="HTH_18"/>
    <property type="match status" value="1"/>
</dbReference>
<dbReference type="SMART" id="SM01009">
    <property type="entry name" value="AlkA_N"/>
    <property type="match status" value="1"/>
</dbReference>
<dbReference type="SMART" id="SM00478">
    <property type="entry name" value="ENDO3c"/>
    <property type="match status" value="1"/>
</dbReference>
<dbReference type="SMART" id="SM00342">
    <property type="entry name" value="HTH_ARAC"/>
    <property type="match status" value="1"/>
</dbReference>
<dbReference type="SUPFAM" id="SSF57884">
    <property type="entry name" value="Ada DNA repair protein, N-terminal domain (N-Ada 10)"/>
    <property type="match status" value="1"/>
</dbReference>
<dbReference type="SUPFAM" id="SSF48150">
    <property type="entry name" value="DNA-glycosylase"/>
    <property type="match status" value="1"/>
</dbReference>
<dbReference type="SUPFAM" id="SSF46689">
    <property type="entry name" value="Homeodomain-like"/>
    <property type="match status" value="1"/>
</dbReference>
<dbReference type="SUPFAM" id="SSF55945">
    <property type="entry name" value="TATA-box binding protein-like"/>
    <property type="match status" value="1"/>
</dbReference>
<dbReference type="PROSITE" id="PS00041">
    <property type="entry name" value="HTH_ARAC_FAMILY_1"/>
    <property type="match status" value="1"/>
</dbReference>
<dbReference type="PROSITE" id="PS01124">
    <property type="entry name" value="HTH_ARAC_FAMILY_2"/>
    <property type="match status" value="1"/>
</dbReference>
<sequence>MHDDFERCYRAIQSKDARFDGWFVVAVLTTGVYCRPSCPVRPPFARNVRFLPTAAAAQGEGFRACKRCRPDASPGSPEWNVRSDVVARAMRLIADGTVDRDGVSGLAAQLGYTIRQLERLLQAVVGAGPLALARAQRMQTARVLIETTNLPFGDVAFAAGFSSIRQFNDTVRLACDGTPTALRARAAARFESATASAGTVSLRLPVRAPFAFEGVFGHLAATAVPGCEEVRDGAYRRTLRLPWGNGIVSLTPAPDHVRCLLVLDDFRDLMTATARCRRLLDLDADPEAIVEALGADPDLRAVVGKAPGQRIPRTVDEAEFAVRAVLAQQVSTKAASTHAGRLVAAYGRPVHDRHGALTHTFPSIEQLAEIDPGHLAVPKARQRTINALVASLADKSLVLDAGCDWQRARGQLLALPGVGPWTAEVIAMRGLGDPDAFPASDLGLRLAAKKLGLPAQRRALTVHSARWRPWRSYATQHLWTTLEHPVNQWPPQEKIA</sequence>
<comment type="function">
    <text evidence="1">Is involved in the adaptive response to alkylation damage in DNA caused by alkylating agents. Repairs the Sp diastereomer of DNA methylphosphotriester lesions by a direct and irreversible transfer of the methyl group to one of its own cysteine residues. Also catalyzes the hydrolysis of the deoxyribose N-glycosidic bond to excise 3-methyladenine, 3-methylguanine, 7-methylguanine, O2-methylthymine, and O2-methylcytosine from the damaged DNA polymer formed by alkylation lesions (By similarity).</text>
</comment>
<comment type="function">
    <text evidence="1">The methylation of Alka by methylphosphotriesters in DNA leads to its activation as a transcriptional regulator that activates the transcription of its own gene and other alkylation resistance genes.</text>
</comment>
<comment type="catalytic activity">
    <reaction>
        <text>(2'-deoxyribonucleoside 5'-methylphosphotriester)-DNA + L-cysteinyl-[protein] = 2'-deoxyribonucleotide-DNA + S-methyl-L-cysteinyl-[protein] + H(+)</text>
        <dbReference type="Rhea" id="RHEA:56324"/>
        <dbReference type="Rhea" id="RHEA-COMP:10131"/>
        <dbReference type="Rhea" id="RHEA-COMP:10132"/>
        <dbReference type="Rhea" id="RHEA-COMP:14462"/>
        <dbReference type="Rhea" id="RHEA-COMP:14463"/>
        <dbReference type="ChEBI" id="CHEBI:15378"/>
        <dbReference type="ChEBI" id="CHEBI:29950"/>
        <dbReference type="ChEBI" id="CHEBI:82612"/>
        <dbReference type="ChEBI" id="CHEBI:140284"/>
        <dbReference type="ChEBI" id="CHEBI:140286"/>
        <dbReference type="EC" id="2.1.1.n11"/>
    </reaction>
</comment>
<comment type="catalytic activity">
    <reaction>
        <text>Hydrolysis of alkylated DNA, releasing 3-methyladenine, 3-methylguanine, 7-methylguanine and 7-methyladenine.</text>
        <dbReference type="EC" id="3.2.2.21"/>
    </reaction>
</comment>
<comment type="cofactor">
    <cofactor evidence="1">
        <name>Zn(2+)</name>
        <dbReference type="ChEBI" id="CHEBI:29105"/>
    </cofactor>
    <text evidence="1">Binds 1 zinc ion per subunit.</text>
</comment>
<comment type="subunit">
    <text evidence="3">Co-immunoprecipitates with DarG in the presence and absence of darT.</text>
</comment>
<comment type="miscellaneous">
    <text>This enzyme catalyzes only one turnover and therefore is not strictly catalytic. According to one definition, an enzyme is a biocatalyst that acts repeatedly and over many reaction cycles.</text>
</comment>
<comment type="similarity">
    <text evidence="4">In the C-terminal section; belongs to the alkylbase DNA glycosidase AlkA family.</text>
</comment>
<reference key="1">
    <citation type="journal article" date="1998" name="Nature">
        <title>Deciphering the biology of Mycobacterium tuberculosis from the complete genome sequence.</title>
        <authorList>
            <person name="Cole S.T."/>
            <person name="Brosch R."/>
            <person name="Parkhill J."/>
            <person name="Garnier T."/>
            <person name="Churcher C.M."/>
            <person name="Harris D.E."/>
            <person name="Gordon S.V."/>
            <person name="Eiglmeier K."/>
            <person name="Gas S."/>
            <person name="Barry C.E. III"/>
            <person name="Tekaia F."/>
            <person name="Badcock K."/>
            <person name="Basham D."/>
            <person name="Brown D."/>
            <person name="Chillingworth T."/>
            <person name="Connor R."/>
            <person name="Davies R.M."/>
            <person name="Devlin K."/>
            <person name="Feltwell T."/>
            <person name="Gentles S."/>
            <person name="Hamlin N."/>
            <person name="Holroyd S."/>
            <person name="Hornsby T."/>
            <person name="Jagels K."/>
            <person name="Krogh A."/>
            <person name="McLean J."/>
            <person name="Moule S."/>
            <person name="Murphy L.D."/>
            <person name="Oliver S."/>
            <person name="Osborne J."/>
            <person name="Quail M.A."/>
            <person name="Rajandream M.A."/>
            <person name="Rogers J."/>
            <person name="Rutter S."/>
            <person name="Seeger K."/>
            <person name="Skelton S."/>
            <person name="Squares S."/>
            <person name="Squares R."/>
            <person name="Sulston J.E."/>
            <person name="Taylor K."/>
            <person name="Whitehead S."/>
            <person name="Barrell B.G."/>
        </authorList>
    </citation>
    <scope>NUCLEOTIDE SEQUENCE [LARGE SCALE GENOMIC DNA]</scope>
    <source>
        <strain>ATCC 25618 / H37Rv</strain>
    </source>
</reference>
<reference key="2">
    <citation type="submission" date="1996-08" db="EMBL/GenBank/DDBJ databases">
        <title>Mycobacterium tuberculosis 3-methyladenine glycosidase and O6-methylguanine methyltransferase genes.</title>
        <authorList>
            <person name="Bourn W.R."/>
            <person name="Harington A."/>
            <person name="Wiid I."/>
            <person name="van Helden P.D."/>
        </authorList>
    </citation>
    <scope>NUCLEOTIDE SEQUENCE [GENOMIC DNA] OF 263-496</scope>
    <source>
        <strain>ATCC 25618 / H37Rv</strain>
    </source>
</reference>
<reference key="3">
    <citation type="journal article" date="2011" name="Mol. Cell. Proteomics">
        <title>Proteogenomic analysis of Mycobacterium tuberculosis by high resolution mass spectrometry.</title>
        <authorList>
            <person name="Kelkar D.S."/>
            <person name="Kumar D."/>
            <person name="Kumar P."/>
            <person name="Balakrishnan L."/>
            <person name="Muthusamy B."/>
            <person name="Yadav A.K."/>
            <person name="Shrivastava P."/>
            <person name="Marimuthu A."/>
            <person name="Anand S."/>
            <person name="Sundaram H."/>
            <person name="Kingsbury R."/>
            <person name="Harsha H.C."/>
            <person name="Nair B."/>
            <person name="Prasad T.S."/>
            <person name="Chauhan D.S."/>
            <person name="Katoch K."/>
            <person name="Katoch V.M."/>
            <person name="Kumar P."/>
            <person name="Chaerkady R."/>
            <person name="Ramachandran S."/>
            <person name="Dash D."/>
            <person name="Pandey A."/>
        </authorList>
    </citation>
    <scope>IDENTIFICATION BY MASS SPECTROMETRY [LARGE SCALE ANALYSIS]</scope>
    <source>
        <strain>ATCC 25618 / H37Rv</strain>
    </source>
</reference>
<reference key="4">
    <citation type="journal article" date="2020" name="Mol. Microbiol.">
        <title>Depletion of the DarG antitoxin in Mycobacterium tuberculosis triggers the DNA-damage response and leads to cell death.</title>
        <authorList>
            <person name="Zaveri A."/>
            <person name="Wang R."/>
            <person name="Botella L."/>
            <person name="Sharma R."/>
            <person name="Zhu L."/>
            <person name="Wallach J.B."/>
            <person name="Song N."/>
            <person name="Jansen R.S."/>
            <person name="Rhee K.Y."/>
            <person name="Ehrt S."/>
            <person name="Schnappinger D."/>
        </authorList>
    </citation>
    <scope>SUBUNIT</scope>
    <source>
        <strain>H37Rv</strain>
    </source>
</reference>
<evidence type="ECO:0000250" key="1"/>
<evidence type="ECO:0000255" key="2">
    <source>
        <dbReference type="PROSITE-ProRule" id="PRU00593"/>
    </source>
</evidence>
<evidence type="ECO:0000269" key="3">
    <source>
    </source>
</evidence>
<evidence type="ECO:0000305" key="4"/>
<feature type="chain" id="PRO_0000139389" description="Probable bifunctional transcriptional activator/DNA repair enzyme AlkA">
    <location>
        <begin position="1"/>
        <end position="496"/>
    </location>
</feature>
<feature type="domain" description="HTH araC/xylS-type" evidence="2">
    <location>
        <begin position="87"/>
        <end position="185"/>
    </location>
</feature>
<feature type="DNA-binding region" description="H-T-H motif" evidence="2">
    <location>
        <begin position="104"/>
        <end position="125"/>
    </location>
</feature>
<feature type="region of interest" description="Methylphosphotriester-DNA--protein-cysteine methyltransferase">
    <location>
        <begin position="1"/>
        <end position="185"/>
    </location>
</feature>
<feature type="region of interest" description="DNA-3-methyladenine glycosylase">
    <location>
        <begin position="202"/>
        <end position="354"/>
    </location>
</feature>
<feature type="active site" description="Nucleophile; methyl group acceptor from methylphosphotriester" evidence="1">
    <location>
        <position position="34"/>
    </location>
</feature>
<feature type="active site" description="Proton acceptor; for DNA glycosylase activity" evidence="1">
    <location>
        <position position="441"/>
    </location>
</feature>
<feature type="binding site" evidence="1">
    <location>
        <position position="30"/>
    </location>
    <ligand>
        <name>DNA</name>
        <dbReference type="ChEBI" id="CHEBI:16991"/>
    </ligand>
</feature>
<feature type="binding site" evidence="1">
    <location>
        <position position="34"/>
    </location>
    <ligand>
        <name>Zn(2+)</name>
        <dbReference type="ChEBI" id="CHEBI:29105"/>
    </ligand>
</feature>
<feature type="binding site" evidence="1">
    <location>
        <position position="38"/>
    </location>
    <ligand>
        <name>Zn(2+)</name>
        <dbReference type="ChEBI" id="CHEBI:29105"/>
    </ligand>
</feature>
<feature type="binding site" evidence="1">
    <location>
        <position position="41"/>
    </location>
    <ligand>
        <name>DNA</name>
        <dbReference type="ChEBI" id="CHEBI:16991"/>
    </ligand>
</feature>
<feature type="binding site" evidence="1">
    <location>
        <position position="63"/>
    </location>
    <ligand>
        <name>DNA</name>
        <dbReference type="ChEBI" id="CHEBI:16991"/>
    </ligand>
</feature>
<feature type="binding site" evidence="1">
    <location>
        <position position="65"/>
    </location>
    <ligand>
        <name>Zn(2+)</name>
        <dbReference type="ChEBI" id="CHEBI:29105"/>
    </ligand>
</feature>
<feature type="binding site" evidence="1">
    <location>
        <position position="68"/>
    </location>
    <ligand>
        <name>Zn(2+)</name>
        <dbReference type="ChEBI" id="CHEBI:29105"/>
    </ligand>
</feature>
<feature type="site" description="Determinant for substrate specificity and/or DNA glycosylase activity" evidence="1">
    <location>
        <position position="421"/>
    </location>
</feature>
<name>ALKA_MYCTU</name>
<gene>
    <name type="primary">alkA</name>
    <name type="synonym">ada</name>
    <name type="ordered locus">Rv1317c</name>
    <name type="ORF">MTCY130.02c</name>
</gene>
<keyword id="KW-0010">Activator</keyword>
<keyword id="KW-0227">DNA damage</keyword>
<keyword id="KW-0234">DNA repair</keyword>
<keyword id="KW-0238">DNA-binding</keyword>
<keyword id="KW-0378">Hydrolase</keyword>
<keyword id="KW-0479">Metal-binding</keyword>
<keyword id="KW-0489">Methyltransferase</keyword>
<keyword id="KW-0511">Multifunctional enzyme</keyword>
<keyword id="KW-1185">Reference proteome</keyword>
<keyword id="KW-0804">Transcription</keyword>
<keyword id="KW-0805">Transcription regulation</keyword>
<keyword id="KW-0808">Transferase</keyword>
<keyword id="KW-0862">Zinc</keyword>